<sequence length="88" mass="9847">MRLILSLPVLAVVLAMVLEGPAPAQAAPDMSSTLESIPGKLKEFGSTVKEKFRTAIDQIQKSDFPEKTRNWFSDVFQKVKEKFETTFS</sequence>
<organism>
    <name type="scientific">Cynopterus brachyotis</name>
    <name type="common">Lesser short-nosed fruit bat</name>
    <name type="synonym">Pachysoma brachyotis</name>
    <dbReference type="NCBI Taxonomy" id="58060"/>
    <lineage>
        <taxon>Eukaryota</taxon>
        <taxon>Metazoa</taxon>
        <taxon>Chordata</taxon>
        <taxon>Craniata</taxon>
        <taxon>Vertebrata</taxon>
        <taxon>Euteleostomi</taxon>
        <taxon>Mammalia</taxon>
        <taxon>Eutheria</taxon>
        <taxon>Laurasiatheria</taxon>
        <taxon>Chiroptera</taxon>
        <taxon>Yinpterochiroptera</taxon>
        <taxon>Pteropodoidea</taxon>
        <taxon>Pteropodidae</taxon>
        <taxon>Cynopterinae</taxon>
        <taxon>Cynopterus</taxon>
    </lineage>
</organism>
<proteinExistence type="inferred from homology"/>
<feature type="signal peptide" evidence="4">
    <location>
        <begin position="1"/>
        <end position="26"/>
    </location>
</feature>
<feature type="chain" id="PRO_0000452411" description="Apolipoprotein C-I">
    <location>
        <begin position="27"/>
        <end position="88"/>
    </location>
</feature>
<feature type="chain" id="PRO_0000452412" description="Truncated apolipoprotein C-I" evidence="3">
    <location>
        <begin position="29"/>
        <end position="88"/>
    </location>
</feature>
<gene>
    <name type="primary">APOC1</name>
</gene>
<accession>P0DTG3</accession>
<dbReference type="EMBL" id="SSHV01010654">
    <property type="status" value="NOT_ANNOTATED_CDS"/>
    <property type="molecule type" value="Genomic_DNA"/>
</dbReference>
<dbReference type="SMR" id="P0DTG3"/>
<dbReference type="GO" id="GO:0034364">
    <property type="term" value="C:high-density lipoprotein particle"/>
    <property type="evidence" value="ECO:0007669"/>
    <property type="project" value="TreeGrafter"/>
</dbReference>
<dbReference type="GO" id="GO:0034361">
    <property type="term" value="C:very-low-density lipoprotein particle"/>
    <property type="evidence" value="ECO:0007669"/>
    <property type="project" value="UniProtKB-KW"/>
</dbReference>
<dbReference type="GO" id="GO:0005504">
    <property type="term" value="F:fatty acid binding"/>
    <property type="evidence" value="ECO:0007669"/>
    <property type="project" value="TreeGrafter"/>
</dbReference>
<dbReference type="GO" id="GO:0004859">
    <property type="term" value="F:phospholipase inhibitor activity"/>
    <property type="evidence" value="ECO:0007669"/>
    <property type="project" value="TreeGrafter"/>
</dbReference>
<dbReference type="GO" id="GO:0006869">
    <property type="term" value="P:lipid transport"/>
    <property type="evidence" value="ECO:0007669"/>
    <property type="project" value="UniProtKB-KW"/>
</dbReference>
<dbReference type="GO" id="GO:0042157">
    <property type="term" value="P:lipoprotein metabolic process"/>
    <property type="evidence" value="ECO:0007669"/>
    <property type="project" value="InterPro"/>
</dbReference>
<dbReference type="GO" id="GO:0032375">
    <property type="term" value="P:negative regulation of cholesterol transport"/>
    <property type="evidence" value="ECO:0007669"/>
    <property type="project" value="TreeGrafter"/>
</dbReference>
<dbReference type="GO" id="GO:0050995">
    <property type="term" value="P:negative regulation of lipid catabolic process"/>
    <property type="evidence" value="ECO:0007669"/>
    <property type="project" value="TreeGrafter"/>
</dbReference>
<dbReference type="GO" id="GO:0010916">
    <property type="term" value="P:negative regulation of very-low-density lipoprotein particle clearance"/>
    <property type="evidence" value="ECO:0007669"/>
    <property type="project" value="TreeGrafter"/>
</dbReference>
<dbReference type="GO" id="GO:0006641">
    <property type="term" value="P:triglyceride metabolic process"/>
    <property type="evidence" value="ECO:0007669"/>
    <property type="project" value="TreeGrafter"/>
</dbReference>
<dbReference type="GO" id="GO:0034447">
    <property type="term" value="P:very-low-density lipoprotein particle clearance"/>
    <property type="evidence" value="ECO:0007669"/>
    <property type="project" value="TreeGrafter"/>
</dbReference>
<dbReference type="Gene3D" id="4.10.260.30">
    <property type="entry name" value="Apolipoprotein C-I"/>
    <property type="match status" value="1"/>
</dbReference>
<dbReference type="InterPro" id="IPR043081">
    <property type="entry name" value="ApoC-1_sf"/>
</dbReference>
<dbReference type="InterPro" id="IPR006781">
    <property type="entry name" value="ApoC-I"/>
</dbReference>
<dbReference type="PANTHER" id="PTHR16565">
    <property type="entry name" value="APOLIPOPROTEIN C-I"/>
    <property type="match status" value="1"/>
</dbReference>
<dbReference type="PANTHER" id="PTHR16565:SF2">
    <property type="entry name" value="APOLIPOPROTEIN C-I"/>
    <property type="match status" value="1"/>
</dbReference>
<dbReference type="Pfam" id="PF04691">
    <property type="entry name" value="ApoC-I"/>
    <property type="match status" value="1"/>
</dbReference>
<name>APOC1_CYNBR</name>
<protein>
    <recommendedName>
        <fullName>Apolipoprotein C-I</fullName>
        <shortName>Apo-CI</shortName>
        <shortName>ApoC-I</shortName>
    </recommendedName>
    <alternativeName>
        <fullName>Apolipoprotein C1</fullName>
    </alternativeName>
    <component>
        <recommendedName>
            <fullName>Truncated apolipoprotein C-I</fullName>
        </recommendedName>
    </component>
</protein>
<comment type="function">
    <text evidence="1 2">Inhibitor of lipoprotein binding to the low density lipoprotein (LDL) receptor, LDL receptor-related protein, and very low density lipoprotein (VLDL) receptor. Associates with high density lipoproteins (HDL) and the triacylglycerol-rich lipoproteins in the plasma and makes up about 10% of the protein of the VLDL and 2% of that of HDL. Appears to interfere directly with fatty acid uptake and is also the major plasma inhibitor of cholesteryl ester transfer protein (CETP). Binds free fatty acids and reduces their intracellular esterification. Modulates the interaction of APOE with beta-migrating VLDL and inhibits binding of beta-VLDL to the LDL receptor-related protein.</text>
</comment>
<comment type="subcellular location">
    <subcellularLocation>
        <location evidence="1">Secreted</location>
    </subcellularLocation>
</comment>
<comment type="similarity">
    <text evidence="5">Belongs to the apolipoprotein C1 family.</text>
</comment>
<reference key="1">
    <citation type="journal article" date="2019" name="Curr. Biol.">
        <title>Historic reveals Anthropocene threat to a tropical urban fruit bat.</title>
        <authorList>
            <person name="Chattopadhyay B."/>
            <person name="Garg K.M."/>
            <person name="Mendenhall I.H."/>
            <person name="Rheindt F.E."/>
        </authorList>
    </citation>
    <scope>NUCLEOTIDE SEQUENCE [LARGE SCALE GENOMIC DNA]</scope>
</reference>
<reference key="2">
    <citation type="unpublished observations" date="2021-01">
        <authorList>
            <person name="Puppione D.L."/>
        </authorList>
    </citation>
    <scope>IDENTIFICATION</scope>
</reference>
<keyword id="KW-0445">Lipid transport</keyword>
<keyword id="KW-0964">Secreted</keyword>
<keyword id="KW-0732">Signal</keyword>
<keyword id="KW-0813">Transport</keyword>
<keyword id="KW-0850">VLDL</keyword>
<evidence type="ECO:0000250" key="1">
    <source>
        <dbReference type="UniProtKB" id="P02654"/>
    </source>
</evidence>
<evidence type="ECO:0000250" key="2">
    <source>
        <dbReference type="UniProtKB" id="P33047"/>
    </source>
</evidence>
<evidence type="ECO:0000250" key="3">
    <source>
        <dbReference type="UniProtKB" id="P86336"/>
    </source>
</evidence>
<evidence type="ECO:0000255" key="4"/>
<evidence type="ECO:0000305" key="5"/>